<feature type="chain" id="PRO_0000365191" description="Eukaryotic translation initiation factor 3 subunit H">
    <location>
        <begin position="1"/>
        <end position="338"/>
    </location>
</feature>
<feature type="domain" description="MPN" evidence="3">
    <location>
        <begin position="22"/>
        <end position="154"/>
    </location>
</feature>
<gene>
    <name evidence="2" type="primary">eIF-3p40</name>
    <name evidence="2" type="synonym">eif3-S3</name>
    <name type="ORF">GM18040</name>
</gene>
<dbReference type="EMBL" id="CH480820">
    <property type="protein sequence ID" value="EDW54329.1"/>
    <property type="molecule type" value="Genomic_DNA"/>
</dbReference>
<dbReference type="SMR" id="B4I1C2"/>
<dbReference type="STRING" id="7238.B4I1C2"/>
<dbReference type="MEROPS" id="M67.971"/>
<dbReference type="EnsemblMetazoa" id="FBtr0201025">
    <property type="protein sequence ID" value="FBpp0199517"/>
    <property type="gene ID" value="FBgn0172947"/>
</dbReference>
<dbReference type="EnsemblMetazoa" id="XM_002037875.2">
    <property type="protein sequence ID" value="XP_002037911.1"/>
    <property type="gene ID" value="LOC6613437"/>
</dbReference>
<dbReference type="GeneID" id="6613437"/>
<dbReference type="KEGG" id="dse:6613437"/>
<dbReference type="CTD" id="8667"/>
<dbReference type="HOGENOM" id="CLU_044094_0_0_1"/>
<dbReference type="OMA" id="WYQSTYF"/>
<dbReference type="OrthoDB" id="6631at7215"/>
<dbReference type="PhylomeDB" id="B4I1C2"/>
<dbReference type="ChiTaRS" id="eIF-3p40">
    <property type="organism name" value="fly"/>
</dbReference>
<dbReference type="Proteomes" id="UP000001292">
    <property type="component" value="Unassembled WGS sequence"/>
</dbReference>
<dbReference type="GO" id="GO:0016282">
    <property type="term" value="C:eukaryotic 43S preinitiation complex"/>
    <property type="evidence" value="ECO:0007669"/>
    <property type="project" value="UniProtKB-UniRule"/>
</dbReference>
<dbReference type="GO" id="GO:0033290">
    <property type="term" value="C:eukaryotic 48S preinitiation complex"/>
    <property type="evidence" value="ECO:0007669"/>
    <property type="project" value="UniProtKB-UniRule"/>
</dbReference>
<dbReference type="GO" id="GO:0005852">
    <property type="term" value="C:eukaryotic translation initiation factor 3 complex"/>
    <property type="evidence" value="ECO:0007669"/>
    <property type="project" value="UniProtKB-UniRule"/>
</dbReference>
<dbReference type="GO" id="GO:0008237">
    <property type="term" value="F:metallopeptidase activity"/>
    <property type="evidence" value="ECO:0007669"/>
    <property type="project" value="InterPro"/>
</dbReference>
<dbReference type="GO" id="GO:0003743">
    <property type="term" value="F:translation initiation factor activity"/>
    <property type="evidence" value="ECO:0007669"/>
    <property type="project" value="UniProtKB-UniRule"/>
</dbReference>
<dbReference type="GO" id="GO:0001732">
    <property type="term" value="P:formation of cytoplasmic translation initiation complex"/>
    <property type="evidence" value="ECO:0007669"/>
    <property type="project" value="UniProtKB-UniRule"/>
</dbReference>
<dbReference type="GO" id="GO:0045747">
    <property type="term" value="P:positive regulation of Notch signaling pathway"/>
    <property type="evidence" value="ECO:0007669"/>
    <property type="project" value="EnsemblMetazoa"/>
</dbReference>
<dbReference type="CDD" id="cd08065">
    <property type="entry name" value="MPN_eIF3h"/>
    <property type="match status" value="1"/>
</dbReference>
<dbReference type="FunFam" id="3.40.140.10:FF:000045">
    <property type="entry name" value="Eukaryotic translation initiation factor 3 subunit H"/>
    <property type="match status" value="1"/>
</dbReference>
<dbReference type="Gene3D" id="3.40.140.10">
    <property type="entry name" value="Cytidine Deaminase, domain 2"/>
    <property type="match status" value="1"/>
</dbReference>
<dbReference type="HAMAP" id="MF_03007">
    <property type="entry name" value="eIF3h"/>
    <property type="match status" value="1"/>
</dbReference>
<dbReference type="InterPro" id="IPR027524">
    <property type="entry name" value="eIF3h"/>
</dbReference>
<dbReference type="InterPro" id="IPR045810">
    <property type="entry name" value="eIF3h_C"/>
</dbReference>
<dbReference type="InterPro" id="IPR000555">
    <property type="entry name" value="JAMM/MPN+_dom"/>
</dbReference>
<dbReference type="InterPro" id="IPR050242">
    <property type="entry name" value="JAMM_MPN+_peptidase_M67A"/>
</dbReference>
<dbReference type="InterPro" id="IPR037518">
    <property type="entry name" value="MPN"/>
</dbReference>
<dbReference type="PANTHER" id="PTHR10410">
    <property type="entry name" value="EUKARYOTIC TRANSLATION INITIATION FACTOR 3 -RELATED"/>
    <property type="match status" value="1"/>
</dbReference>
<dbReference type="Pfam" id="PF19445">
    <property type="entry name" value="eIF3h_C"/>
    <property type="match status" value="1"/>
</dbReference>
<dbReference type="Pfam" id="PF01398">
    <property type="entry name" value="JAB"/>
    <property type="match status" value="1"/>
</dbReference>
<dbReference type="SMART" id="SM00232">
    <property type="entry name" value="JAB_MPN"/>
    <property type="match status" value="1"/>
</dbReference>
<dbReference type="PROSITE" id="PS50249">
    <property type="entry name" value="MPN"/>
    <property type="match status" value="1"/>
</dbReference>
<organism>
    <name type="scientific">Drosophila sechellia</name>
    <name type="common">Fruit fly</name>
    <dbReference type="NCBI Taxonomy" id="7238"/>
    <lineage>
        <taxon>Eukaryota</taxon>
        <taxon>Metazoa</taxon>
        <taxon>Ecdysozoa</taxon>
        <taxon>Arthropoda</taxon>
        <taxon>Hexapoda</taxon>
        <taxon>Insecta</taxon>
        <taxon>Pterygota</taxon>
        <taxon>Neoptera</taxon>
        <taxon>Endopterygota</taxon>
        <taxon>Diptera</taxon>
        <taxon>Brachycera</taxon>
        <taxon>Muscomorpha</taxon>
        <taxon>Ephydroidea</taxon>
        <taxon>Drosophilidae</taxon>
        <taxon>Drosophila</taxon>
        <taxon>Sophophora</taxon>
    </lineage>
</organism>
<name>EIF3H_DROSE</name>
<reference key="1">
    <citation type="journal article" date="2007" name="Nature">
        <title>Evolution of genes and genomes on the Drosophila phylogeny.</title>
        <authorList>
            <consortium name="Drosophila 12 genomes consortium"/>
        </authorList>
    </citation>
    <scope>NUCLEOTIDE SEQUENCE [LARGE SCALE GENOMIC DNA]</scope>
    <source>
        <strain>Rob3c / Tucson 14021-0248.25</strain>
    </source>
</reference>
<accession>B4I1C2</accession>
<comment type="function">
    <text evidence="2">Component of the eukaryotic translation initiation factor 3 (eIF-3) complex, which is involved in protein synthesis of a specialized repertoire of mRNAs and, together with other initiation factors, stimulates binding of mRNA and methionyl-tRNAi to the 40S ribosome. The eIF-3 complex specifically targets and initiates translation of a subset of mRNAs involved in cell proliferation.</text>
</comment>
<comment type="subunit">
    <text evidence="1 2">Component of the eukaryotic translation initiation factor 3 (eIF-3) complex. The eIF-3 complex interacts with pix. Interacts with mxt (By similarity).</text>
</comment>
<comment type="subcellular location">
    <subcellularLocation>
        <location evidence="2">Cytoplasm</location>
    </subcellularLocation>
</comment>
<comment type="similarity">
    <text evidence="2">Belongs to the eIF-3 subunit H family.</text>
</comment>
<proteinExistence type="inferred from homology"/>
<keyword id="KW-0963">Cytoplasm</keyword>
<keyword id="KW-0396">Initiation factor</keyword>
<keyword id="KW-0648">Protein biosynthesis</keyword>
<keyword id="KW-1185">Reference proteome</keyword>
<sequence length="338" mass="38364">MANRANRHAARTEDSDNTINYVQCDGLAVMKMVKHCHEESSNMDLAQGALLGLVVDKCLEITNCFPFPKSGDETMDEEMYQLTVMRRLRRVNVDHLHVGWYQSSDVGNSLSMALLESQYHYQTSIEESVVVVYDTQKSSRGFLCLKAYRLTPQAIQMYKDGDFTPEAFRTLKVGYENLFAEIPIVIKNSPLTNIMMSELNELLPEDKGHNFLDLGTATVLENQMRSLIERVDELYQEAVRYNKYQQVVFKQDTEKHRALAKLAAENAVRTSKGEPTVPEDEVIKQFRPMTAPNRLTATITSGQINTHAQHIAQFCSQSLAKLFITESLQIAKEAKEAK</sequence>
<evidence type="ECO:0000250" key="1">
    <source>
        <dbReference type="UniProtKB" id="Q9U9Q4"/>
    </source>
</evidence>
<evidence type="ECO:0000255" key="2">
    <source>
        <dbReference type="HAMAP-Rule" id="MF_03007"/>
    </source>
</evidence>
<evidence type="ECO:0000255" key="3">
    <source>
        <dbReference type="PROSITE-ProRule" id="PRU01182"/>
    </source>
</evidence>
<protein>
    <recommendedName>
        <fullName evidence="2">Eukaryotic translation initiation factor 3 subunit H</fullName>
        <shortName evidence="2">eIF3h</shortName>
    </recommendedName>
    <alternativeName>
        <fullName evidence="2">Eukaryotic translation initiation factor 3 subunit 3</fullName>
    </alternativeName>
</protein>